<name>TS1R3_RAT</name>
<feature type="signal peptide" evidence="2">
    <location>
        <begin position="1"/>
        <end position="20"/>
    </location>
</feature>
<feature type="chain" id="PRO_0000012964" description="Taste receptor type 1 member 3">
    <location>
        <begin position="21"/>
        <end position="858"/>
    </location>
</feature>
<feature type="topological domain" description="Extracellular" evidence="2">
    <location>
        <begin position="21"/>
        <end position="575"/>
    </location>
</feature>
<feature type="transmembrane region" description="Helical; Name=1" evidence="2">
    <location>
        <begin position="576"/>
        <end position="596"/>
    </location>
</feature>
<feature type="topological domain" description="Cytoplasmic" evidence="2">
    <location>
        <begin position="597"/>
        <end position="610"/>
    </location>
</feature>
<feature type="transmembrane region" description="Helical; Name=2" evidence="2">
    <location>
        <begin position="611"/>
        <end position="631"/>
    </location>
</feature>
<feature type="topological domain" description="Extracellular" evidence="2">
    <location>
        <begin position="632"/>
        <end position="644"/>
    </location>
</feature>
<feature type="transmembrane region" description="Helical; Name=3" evidence="2">
    <location>
        <begin position="645"/>
        <end position="665"/>
    </location>
</feature>
<feature type="topological domain" description="Cytoplasmic" evidence="2">
    <location>
        <begin position="666"/>
        <end position="687"/>
    </location>
</feature>
<feature type="transmembrane region" description="Helical; Name=4" evidence="2">
    <location>
        <begin position="688"/>
        <end position="708"/>
    </location>
</feature>
<feature type="topological domain" description="Extracellular" evidence="2">
    <location>
        <begin position="709"/>
        <end position="735"/>
    </location>
</feature>
<feature type="transmembrane region" description="Helical; Name=5" evidence="2">
    <location>
        <begin position="736"/>
        <end position="756"/>
    </location>
</feature>
<feature type="topological domain" description="Cytoplasmic" evidence="2">
    <location>
        <begin position="757"/>
        <end position="767"/>
    </location>
</feature>
<feature type="transmembrane region" description="Helical; Name=6" evidence="2">
    <location>
        <begin position="768"/>
        <end position="788"/>
    </location>
</feature>
<feature type="topological domain" description="Extracellular" evidence="2">
    <location>
        <begin position="789"/>
        <end position="796"/>
    </location>
</feature>
<feature type="transmembrane region" description="Helical; Name=7" evidence="2">
    <location>
        <begin position="797"/>
        <end position="817"/>
    </location>
</feature>
<feature type="topological domain" description="Cytoplasmic" evidence="2">
    <location>
        <begin position="818"/>
        <end position="858"/>
    </location>
</feature>
<feature type="region of interest" description="Disordered" evidence="3">
    <location>
        <begin position="839"/>
        <end position="858"/>
    </location>
</feature>
<feature type="glycosylation site" description="N-linked (GlcNAc...) asparagine" evidence="2">
    <location>
        <position position="85"/>
    </location>
</feature>
<feature type="glycosylation site" description="N-linked (GlcNAc...) asparagine" evidence="2">
    <location>
        <position position="130"/>
    </location>
</feature>
<feature type="glycosylation site" description="N-linked (GlcNAc...) asparagine" evidence="2">
    <location>
        <position position="203"/>
    </location>
</feature>
<feature type="glycosylation site" description="N-linked (GlcNAc...) asparagine" evidence="2">
    <location>
        <position position="264"/>
    </location>
</feature>
<feature type="glycosylation site" description="N-linked (GlcNAc...) asparagine" evidence="2">
    <location>
        <position position="379"/>
    </location>
</feature>
<feature type="glycosylation site" description="N-linked (GlcNAc...) asparagine" evidence="2">
    <location>
        <position position="387"/>
    </location>
</feature>
<feature type="glycosylation site" description="N-linked (GlcNAc...) asparagine" evidence="2">
    <location>
        <position position="418"/>
    </location>
</feature>
<feature type="glycosylation site" description="N-linked (GlcNAc...) asparagine" evidence="2">
    <location>
        <position position="439"/>
    </location>
</feature>
<feature type="glycosylation site" description="N-linked (GlcNAc...) asparagine" evidence="2">
    <location>
        <position position="482"/>
    </location>
</feature>
<gene>
    <name type="primary">Tas1r3</name>
    <name type="synonym">T1r3</name>
    <name type="synonym">Tr3</name>
</gene>
<comment type="function">
    <text evidence="1">Putative taste receptor. TAS1R1/TAS1R3 responds to the umami taste stimulus (the taste of monosodium glutamate) and also to most of the 20 standard L-amino acids, but not to their D-enantiomers or other compounds. TAS1R2/TAS1R3 recognizes diverse natural and synthetic sweeteners. TAS1R3 is essential for the recognition and response to the disaccharide trehalose. Sequence differences within and between species can significantly influence the selectivity and specificity of taste responses (By similarity).</text>
</comment>
<comment type="subunit">
    <text evidence="1">Forms homodimers or heterodimers with TAS1R1 and TAS1R2.</text>
</comment>
<comment type="subcellular location">
    <subcellularLocation>
        <location>Cell membrane</location>
        <topology>Multi-pass membrane protein</topology>
    </subcellularLocation>
</comment>
<comment type="similarity">
    <text evidence="4">Belongs to the G-protein coupled receptor 3 family. TAS1R subfamily.</text>
</comment>
<reference key="1">
    <citation type="journal article" date="2001" name="Cell">
        <title>Mammalian sweet taste receptors.</title>
        <authorList>
            <person name="Nelson G."/>
            <person name="Hoon M.A."/>
            <person name="Chandrashekar J."/>
            <person name="Zhang Y."/>
            <person name="Ryba N.J.P."/>
            <person name="Zuker C.S."/>
        </authorList>
    </citation>
    <scope>NUCLEOTIDE SEQUENCE [MRNA]</scope>
    <source>
        <strain>Wistar</strain>
        <tissue>Circumvallate papilla</tissue>
    </source>
</reference>
<reference key="2">
    <citation type="journal article" date="2002" name="Proc. Natl. Acad. Sci. U.S.A.">
        <title>Human receptors for sweet and umami taste.</title>
        <authorList>
            <person name="Li X."/>
            <person name="Staszewski L."/>
            <person name="Xu H."/>
            <person name="Durick K."/>
            <person name="Zoller M."/>
            <person name="Adler E."/>
        </authorList>
    </citation>
    <scope>NUCLEOTIDE SEQUENCE [MRNA]</scope>
    <source>
        <strain>Wistar</strain>
        <tissue>Circumvallate papilla</tissue>
    </source>
</reference>
<sequence length="858" mass="94846">MPGLAILGLSLAAFLELGMGSSLCLSQQFKAQGDYILGGLFPLGTTEEATLNQRTQPNGILCTRFSPLGLFLAMAMKMAVEEINNGSALLPGLRLGYDLFDTCSEPVVTMKPSLMFMAKVGSQSIAAYCNYTQYQPRVLAVIGPHSSELALITGKFFSFFLMPQVSYSASMDRLSDRETFPSFFRTVPSDRVQLQAVVTLLQNFSWNWVAALGSDDDYGREGLSIFSGLANSRGICIAHEGLVPQHDTSGQQLGKVVDVLRQVNQSKVQVVVLFASARAVYSLFSYSILHDLSPKVWVASESWLTSDLVMTLPNIARVGTVLGFLQRGALLPEFSHYVETRLALAADPTFCASLKAELDLEERVMGPRCSQCDYIMLQNLSSGLMQNLSAGQLHHQIFATYAAVYSVAQALHNTLQCNVSHCHTSEPVQPWQLLENMYNMSFRARDLTLQFDAKGSVDMEYDLKMWVWQSPTPVLHTVGTFNGTLQLQHSKMYWPGNQVPVSQCSRQCKDGQVRRVKGFHSCCYDCVDCKAGSYRKHPDDFTCTPCGKDQWSPEKSTTCLPRRPKFLAWGEPAVLSLLLLLCLVLGLTLAALGLFVHYWDSPLVQASGGSLFCFGLICLGLFCLSVLLFPGRPRSASCLAQQPMAHLPLTGCLSTLFLQAAEIFVESELPLSWANWLCSYLRGPWAWLVVLLATLVEAALCAWYLMAFPPEVVTDWQVLPTEVLEHCRMRSWVSLGLVHITNAVLAFLCFLGTFLVQSQPGRYNRARGLTFAMLAYFIIWVSFVPLLANVQVAYQPAVQMGAILFCALGILATFHLPKCYVLLWLPELNTQEFFLGRSPKEASDGNSGSSEATRGHSE</sequence>
<keyword id="KW-1003">Cell membrane</keyword>
<keyword id="KW-0297">G-protein coupled receptor</keyword>
<keyword id="KW-0325">Glycoprotein</keyword>
<keyword id="KW-0472">Membrane</keyword>
<keyword id="KW-0675">Receptor</keyword>
<keyword id="KW-1185">Reference proteome</keyword>
<keyword id="KW-0716">Sensory transduction</keyword>
<keyword id="KW-0732">Signal</keyword>
<keyword id="KW-0919">Taste</keyword>
<keyword id="KW-0807">Transducer</keyword>
<keyword id="KW-0812">Transmembrane</keyword>
<keyword id="KW-1133">Transmembrane helix</keyword>
<protein>
    <recommendedName>
        <fullName>Taste receptor type 1 member 3</fullName>
    </recommendedName>
    <alternativeName>
        <fullName>Sweet taste receptor T1R3</fullName>
    </alternativeName>
</protein>
<proteinExistence type="evidence at transcript level"/>
<dbReference type="EMBL" id="AY032620">
    <property type="protein sequence ID" value="AAK51601.1"/>
    <property type="molecule type" value="mRNA"/>
</dbReference>
<dbReference type="EMBL" id="AF456324">
    <property type="protein sequence ID" value="AAM10636.1"/>
    <property type="molecule type" value="mRNA"/>
</dbReference>
<dbReference type="RefSeq" id="NP_570831.1">
    <property type="nucleotide sequence ID" value="NM_130818.2"/>
</dbReference>
<dbReference type="RefSeq" id="XP_008762556.1">
    <property type="nucleotide sequence ID" value="XM_008764334.1"/>
</dbReference>
<dbReference type="SMR" id="Q923K1"/>
<dbReference type="FunCoup" id="Q923K1">
    <property type="interactions" value="129"/>
</dbReference>
<dbReference type="STRING" id="10116.ENSRNOP00000026671"/>
<dbReference type="GlyCosmos" id="Q923K1">
    <property type="glycosylation" value="9 sites, No reported glycans"/>
</dbReference>
<dbReference type="GlyGen" id="Q923K1">
    <property type="glycosylation" value="9 sites"/>
</dbReference>
<dbReference type="PaxDb" id="10116-ENSRNOP00000026671"/>
<dbReference type="Ensembl" id="ENSRNOT00000026671.3">
    <property type="protein sequence ID" value="ENSRNOP00000026671.1"/>
    <property type="gene ID" value="ENSRNOG00000019589.3"/>
</dbReference>
<dbReference type="GeneID" id="170634"/>
<dbReference type="KEGG" id="rno:170634"/>
<dbReference type="AGR" id="RGD:620539"/>
<dbReference type="CTD" id="83756"/>
<dbReference type="RGD" id="620539">
    <property type="gene designation" value="Tas1r3"/>
</dbReference>
<dbReference type="eggNOG" id="KOG1056">
    <property type="taxonomic scope" value="Eukaryota"/>
</dbReference>
<dbReference type="GeneTree" id="ENSGT00940000160679"/>
<dbReference type="HOGENOM" id="CLU_005389_1_0_1"/>
<dbReference type="InParanoid" id="Q923K1"/>
<dbReference type="OMA" id="FHLCCYD"/>
<dbReference type="OrthoDB" id="5984008at2759"/>
<dbReference type="PhylomeDB" id="Q923K1"/>
<dbReference type="TreeFam" id="TF331269"/>
<dbReference type="Reactome" id="R-RNO-418594">
    <property type="pathway name" value="G alpha (i) signalling events"/>
</dbReference>
<dbReference type="Reactome" id="R-RNO-420499">
    <property type="pathway name" value="Class C/3 (Metabotropic glutamate/pheromone receptors)"/>
</dbReference>
<dbReference type="Reactome" id="R-RNO-9717207">
    <property type="pathway name" value="Sensory perception of sweet, bitter, and umami (glutamate) taste"/>
</dbReference>
<dbReference type="PRO" id="PR:Q923K1"/>
<dbReference type="Proteomes" id="UP000002494">
    <property type="component" value="Chromosome 5"/>
</dbReference>
<dbReference type="Bgee" id="ENSRNOG00000019589">
    <property type="expression patterns" value="Expressed in skeletal muscle tissue and 2 other cell types or tissues"/>
</dbReference>
<dbReference type="GO" id="GO:0005794">
    <property type="term" value="C:Golgi apparatus"/>
    <property type="evidence" value="ECO:0007669"/>
    <property type="project" value="Ensembl"/>
</dbReference>
<dbReference type="GO" id="GO:0016020">
    <property type="term" value="C:membrane"/>
    <property type="evidence" value="ECO:0000305"/>
    <property type="project" value="UniProtKB"/>
</dbReference>
<dbReference type="GO" id="GO:0005886">
    <property type="term" value="C:plasma membrane"/>
    <property type="evidence" value="ECO:0000318"/>
    <property type="project" value="GO_Central"/>
</dbReference>
<dbReference type="GO" id="GO:1903767">
    <property type="term" value="C:sweet taste receptor complex"/>
    <property type="evidence" value="ECO:0000266"/>
    <property type="project" value="RGD"/>
</dbReference>
<dbReference type="GO" id="GO:0004930">
    <property type="term" value="F:G protein-coupled receptor activity"/>
    <property type="evidence" value="ECO:0000318"/>
    <property type="project" value="GO_Central"/>
</dbReference>
<dbReference type="GO" id="GO:0033041">
    <property type="term" value="F:sweet taste receptor activity"/>
    <property type="evidence" value="ECO:0007669"/>
    <property type="project" value="Ensembl"/>
</dbReference>
<dbReference type="GO" id="GO:0008527">
    <property type="term" value="F:taste receptor activity"/>
    <property type="evidence" value="ECO:0000314"/>
    <property type="project" value="RGD"/>
</dbReference>
<dbReference type="GO" id="GO:0001582">
    <property type="term" value="P:detection of chemical stimulus involved in sensory perception of sweet taste"/>
    <property type="evidence" value="ECO:0000266"/>
    <property type="project" value="RGD"/>
</dbReference>
<dbReference type="GO" id="GO:0050916">
    <property type="term" value="P:sensory perception of sweet taste"/>
    <property type="evidence" value="ECO:0000314"/>
    <property type="project" value="UniProtKB"/>
</dbReference>
<dbReference type="GO" id="GO:0050917">
    <property type="term" value="P:sensory perception of umami taste"/>
    <property type="evidence" value="ECO:0000314"/>
    <property type="project" value="UniProtKB"/>
</dbReference>
<dbReference type="FunFam" id="3.40.50.2300:FF:000016">
    <property type="entry name" value="Taste 1 receptor member 2"/>
    <property type="match status" value="1"/>
</dbReference>
<dbReference type="FunFam" id="2.10.50.30:FF:000004">
    <property type="entry name" value="Taste receptor type 1 member 3-like protein"/>
    <property type="match status" value="1"/>
</dbReference>
<dbReference type="Gene3D" id="3.40.50.2300">
    <property type="match status" value="2"/>
</dbReference>
<dbReference type="Gene3D" id="2.10.50.30">
    <property type="entry name" value="GPCR, family 3, nine cysteines domain"/>
    <property type="match status" value="1"/>
</dbReference>
<dbReference type="InterPro" id="IPR001828">
    <property type="entry name" value="ANF_lig-bd_rcpt"/>
</dbReference>
<dbReference type="InterPro" id="IPR000337">
    <property type="entry name" value="GPCR_3"/>
</dbReference>
<dbReference type="InterPro" id="IPR011500">
    <property type="entry name" value="GPCR_3_9-Cys_dom"/>
</dbReference>
<dbReference type="InterPro" id="IPR038550">
    <property type="entry name" value="GPCR_3_9-Cys_sf"/>
</dbReference>
<dbReference type="InterPro" id="IPR017978">
    <property type="entry name" value="GPCR_3_C"/>
</dbReference>
<dbReference type="InterPro" id="IPR000068">
    <property type="entry name" value="GPCR_3_Ca_sens_rcpt-rel"/>
</dbReference>
<dbReference type="InterPro" id="IPR017979">
    <property type="entry name" value="GPCR_3_CS"/>
</dbReference>
<dbReference type="InterPro" id="IPR028082">
    <property type="entry name" value="Peripla_BP_I"/>
</dbReference>
<dbReference type="PANTHER" id="PTHR24061">
    <property type="entry name" value="CALCIUM-SENSING RECEPTOR-RELATED"/>
    <property type="match status" value="1"/>
</dbReference>
<dbReference type="PANTHER" id="PTHR24061:SF435">
    <property type="entry name" value="TASTE RECEPTOR TYPE 1 MEMBER 3"/>
    <property type="match status" value="1"/>
</dbReference>
<dbReference type="Pfam" id="PF00003">
    <property type="entry name" value="7tm_3"/>
    <property type="match status" value="1"/>
</dbReference>
<dbReference type="Pfam" id="PF01094">
    <property type="entry name" value="ANF_receptor"/>
    <property type="match status" value="1"/>
</dbReference>
<dbReference type="Pfam" id="PF07562">
    <property type="entry name" value="NCD3G"/>
    <property type="match status" value="1"/>
</dbReference>
<dbReference type="PRINTS" id="PR00592">
    <property type="entry name" value="CASENSINGR"/>
</dbReference>
<dbReference type="PRINTS" id="PR00248">
    <property type="entry name" value="GPCRMGR"/>
</dbReference>
<dbReference type="SUPFAM" id="SSF53822">
    <property type="entry name" value="Periplasmic binding protein-like I"/>
    <property type="match status" value="1"/>
</dbReference>
<dbReference type="PROSITE" id="PS00980">
    <property type="entry name" value="G_PROTEIN_RECEP_F3_2"/>
    <property type="match status" value="1"/>
</dbReference>
<dbReference type="PROSITE" id="PS50259">
    <property type="entry name" value="G_PROTEIN_RECEP_F3_4"/>
    <property type="match status" value="1"/>
</dbReference>
<accession>Q923K1</accession>
<evidence type="ECO:0000250" key="1"/>
<evidence type="ECO:0000255" key="2"/>
<evidence type="ECO:0000256" key="3">
    <source>
        <dbReference type="SAM" id="MobiDB-lite"/>
    </source>
</evidence>
<evidence type="ECO:0000305" key="4"/>
<organism>
    <name type="scientific">Rattus norvegicus</name>
    <name type="common">Rat</name>
    <dbReference type="NCBI Taxonomy" id="10116"/>
    <lineage>
        <taxon>Eukaryota</taxon>
        <taxon>Metazoa</taxon>
        <taxon>Chordata</taxon>
        <taxon>Craniata</taxon>
        <taxon>Vertebrata</taxon>
        <taxon>Euteleostomi</taxon>
        <taxon>Mammalia</taxon>
        <taxon>Eutheria</taxon>
        <taxon>Euarchontoglires</taxon>
        <taxon>Glires</taxon>
        <taxon>Rodentia</taxon>
        <taxon>Myomorpha</taxon>
        <taxon>Muroidea</taxon>
        <taxon>Muridae</taxon>
        <taxon>Murinae</taxon>
        <taxon>Rattus</taxon>
    </lineage>
</organism>